<proteinExistence type="inferred from homology"/>
<reference key="1">
    <citation type="journal article" date="1999" name="Nature">
        <title>Genomic sequence comparison of two unrelated isolates of the human gastric pathogen Helicobacter pylori.</title>
        <authorList>
            <person name="Alm R.A."/>
            <person name="Ling L.-S.L."/>
            <person name="Moir D.T."/>
            <person name="King B.L."/>
            <person name="Brown E.D."/>
            <person name="Doig P.C."/>
            <person name="Smith D.R."/>
            <person name="Noonan B."/>
            <person name="Guild B.C."/>
            <person name="deJonge B.L."/>
            <person name="Carmel G."/>
            <person name="Tummino P.J."/>
            <person name="Caruso A."/>
            <person name="Uria-Nickelsen M."/>
            <person name="Mills D.M."/>
            <person name="Ives C."/>
            <person name="Gibson R."/>
            <person name="Merberg D."/>
            <person name="Mills S.D."/>
            <person name="Jiang Q."/>
            <person name="Taylor D.E."/>
            <person name="Vovis G.F."/>
            <person name="Trust T.J."/>
        </authorList>
    </citation>
    <scope>NUCLEOTIDE SEQUENCE [LARGE SCALE GENOMIC DNA]</scope>
    <source>
        <strain>J99 / ATCC 700824</strain>
    </source>
</reference>
<sequence length="160" mass="18411">MFGMGFFEILVVLIVAIIFLGPEKFPQAVVDIVKFFRAVKKTLNDAKDTLDKEINIEEIKKETLEYQKLFENKVESLKGVKIEELEDAKVTAENEIKSIQDLMQDYKRSLETNTIPNHLNEEVSNEEALNKEVSSDESPKEVQLTTDNNAKEHDKEKEHV</sequence>
<dbReference type="EMBL" id="AE001439">
    <property type="protein sequence ID" value="AAD05939.1"/>
    <property type="molecule type" value="Genomic_DNA"/>
</dbReference>
<dbReference type="PIR" id="E71942">
    <property type="entry name" value="E71942"/>
</dbReference>
<dbReference type="RefSeq" id="WP_000467517.1">
    <property type="nucleotide sequence ID" value="NC_000921.1"/>
</dbReference>
<dbReference type="SMR" id="Q9ZM58"/>
<dbReference type="KEGG" id="hpj:jhp_0365"/>
<dbReference type="PATRIC" id="fig|85963.30.peg.646"/>
<dbReference type="eggNOG" id="COG1826">
    <property type="taxonomic scope" value="Bacteria"/>
</dbReference>
<dbReference type="Proteomes" id="UP000000804">
    <property type="component" value="Chromosome"/>
</dbReference>
<dbReference type="GO" id="GO:0033281">
    <property type="term" value="C:TAT protein transport complex"/>
    <property type="evidence" value="ECO:0007669"/>
    <property type="project" value="UniProtKB-UniRule"/>
</dbReference>
<dbReference type="GO" id="GO:0008320">
    <property type="term" value="F:protein transmembrane transporter activity"/>
    <property type="evidence" value="ECO:0007669"/>
    <property type="project" value="UniProtKB-UniRule"/>
</dbReference>
<dbReference type="GO" id="GO:0043953">
    <property type="term" value="P:protein transport by the Tat complex"/>
    <property type="evidence" value="ECO:0007669"/>
    <property type="project" value="UniProtKB-UniRule"/>
</dbReference>
<dbReference type="Gene3D" id="1.20.5.3310">
    <property type="match status" value="1"/>
</dbReference>
<dbReference type="HAMAP" id="MF_00237">
    <property type="entry name" value="TatB"/>
    <property type="match status" value="1"/>
</dbReference>
<dbReference type="InterPro" id="IPR018448">
    <property type="entry name" value="TatB"/>
</dbReference>
<dbReference type="NCBIfam" id="TIGR01410">
    <property type="entry name" value="tatB"/>
    <property type="match status" value="1"/>
</dbReference>
<dbReference type="PANTHER" id="PTHR33162">
    <property type="entry name" value="SEC-INDEPENDENT PROTEIN TRANSLOCASE PROTEIN TATA, CHLOROPLASTIC"/>
    <property type="match status" value="1"/>
</dbReference>
<dbReference type="PANTHER" id="PTHR33162:SF1">
    <property type="entry name" value="SEC-INDEPENDENT PROTEIN TRANSLOCASE PROTEIN TATA, CHLOROPLASTIC"/>
    <property type="match status" value="1"/>
</dbReference>
<dbReference type="PRINTS" id="PR01506">
    <property type="entry name" value="TATBPROTEIN"/>
</dbReference>
<name>TATB_HELPJ</name>
<organism>
    <name type="scientific">Helicobacter pylori (strain J99 / ATCC 700824)</name>
    <name type="common">Campylobacter pylori J99</name>
    <dbReference type="NCBI Taxonomy" id="85963"/>
    <lineage>
        <taxon>Bacteria</taxon>
        <taxon>Pseudomonadati</taxon>
        <taxon>Campylobacterota</taxon>
        <taxon>Epsilonproteobacteria</taxon>
        <taxon>Campylobacterales</taxon>
        <taxon>Helicobacteraceae</taxon>
        <taxon>Helicobacter</taxon>
    </lineage>
</organism>
<protein>
    <recommendedName>
        <fullName evidence="1">Sec-independent protein translocase protein TatB</fullName>
    </recommendedName>
</protein>
<feature type="chain" id="PRO_0000192659" description="Sec-independent protein translocase protein TatB">
    <location>
        <begin position="1"/>
        <end position="160"/>
    </location>
</feature>
<feature type="transmembrane region" description="Helical" evidence="1">
    <location>
        <begin position="1"/>
        <end position="21"/>
    </location>
</feature>
<feature type="region of interest" description="Disordered" evidence="2">
    <location>
        <begin position="118"/>
        <end position="160"/>
    </location>
</feature>
<feature type="compositionally biased region" description="Basic and acidic residues" evidence="2">
    <location>
        <begin position="128"/>
        <end position="140"/>
    </location>
</feature>
<feature type="compositionally biased region" description="Basic and acidic residues" evidence="2">
    <location>
        <begin position="149"/>
        <end position="160"/>
    </location>
</feature>
<keyword id="KW-0997">Cell inner membrane</keyword>
<keyword id="KW-1003">Cell membrane</keyword>
<keyword id="KW-0472">Membrane</keyword>
<keyword id="KW-0653">Protein transport</keyword>
<keyword id="KW-0811">Translocation</keyword>
<keyword id="KW-0812">Transmembrane</keyword>
<keyword id="KW-1133">Transmembrane helix</keyword>
<keyword id="KW-0813">Transport</keyword>
<evidence type="ECO:0000255" key="1">
    <source>
        <dbReference type="HAMAP-Rule" id="MF_00237"/>
    </source>
</evidence>
<evidence type="ECO:0000256" key="2">
    <source>
        <dbReference type="SAM" id="MobiDB-lite"/>
    </source>
</evidence>
<comment type="function">
    <text evidence="1">Part of the twin-arginine translocation (Tat) system that transports large folded proteins containing a characteristic twin-arginine motif in their signal peptide across membranes. Together with TatC, TatB is part of a receptor directly interacting with Tat signal peptides. TatB may form an oligomeric binding site that transiently accommodates folded Tat precursor proteins before their translocation.</text>
</comment>
<comment type="subunit">
    <text evidence="1">The Tat system comprises two distinct complexes: a TatABC complex, containing multiple copies of TatA, TatB and TatC subunits, and a separate TatA complex, containing only TatA subunits. Substrates initially bind to the TatABC complex, which probably triggers association of the separate TatA complex to form the active translocon.</text>
</comment>
<comment type="subcellular location">
    <subcellularLocation>
        <location evidence="1">Cell inner membrane</location>
        <topology evidence="1">Single-pass membrane protein</topology>
    </subcellularLocation>
</comment>
<comment type="similarity">
    <text evidence="1">Belongs to the TatB family.</text>
</comment>
<accession>Q9ZM58</accession>
<gene>
    <name evidence="1" type="primary">tatB</name>
    <name type="ordered locus">jhp_0365</name>
</gene>